<organism>
    <name type="scientific">Salmonella agona (strain SL483)</name>
    <dbReference type="NCBI Taxonomy" id="454166"/>
    <lineage>
        <taxon>Bacteria</taxon>
        <taxon>Pseudomonadati</taxon>
        <taxon>Pseudomonadota</taxon>
        <taxon>Gammaproteobacteria</taxon>
        <taxon>Enterobacterales</taxon>
        <taxon>Enterobacteriaceae</taxon>
        <taxon>Salmonella</taxon>
    </lineage>
</organism>
<evidence type="ECO:0000255" key="1">
    <source>
        <dbReference type="HAMAP-Rule" id="MF_01101"/>
    </source>
</evidence>
<sequence length="151" mass="17201">MSTPDNRSVNFFSLFRRGQHYAKTWPMEKRLAPVFVENRVIRMTRYAIRFMPPVAVFTLCWQIALGGQLGPAVATALFALSLPMQGLWWLGKRSVTPLPPSILNWFYEVRGKLQEAGQALAPVEGKPDYQALADTLKRAFKQLDKTFLDDL</sequence>
<comment type="subcellular location">
    <subcellularLocation>
        <location evidence="1">Cell inner membrane</location>
        <topology evidence="1">Multi-pass membrane protein</topology>
    </subcellularLocation>
</comment>
<comment type="similarity">
    <text evidence="1">Belongs to the UPF0208 family.</text>
</comment>
<gene>
    <name evidence="1" type="primary">yfbV</name>
    <name type="ordered locus">SeAg_B2476</name>
</gene>
<name>YFBV_SALA4</name>
<accession>B5EZL8</accession>
<protein>
    <recommendedName>
        <fullName evidence="1">UPF0208 membrane protein YfbV</fullName>
    </recommendedName>
</protein>
<feature type="chain" id="PRO_1000136995" description="UPF0208 membrane protein YfbV">
    <location>
        <begin position="1"/>
        <end position="151"/>
    </location>
</feature>
<feature type="transmembrane region" description="Helical" evidence="1">
    <location>
        <begin position="46"/>
        <end position="65"/>
    </location>
</feature>
<feature type="transmembrane region" description="Helical" evidence="1">
    <location>
        <begin position="69"/>
        <end position="91"/>
    </location>
</feature>
<keyword id="KW-0997">Cell inner membrane</keyword>
<keyword id="KW-1003">Cell membrane</keyword>
<keyword id="KW-0472">Membrane</keyword>
<keyword id="KW-0812">Transmembrane</keyword>
<keyword id="KW-1133">Transmembrane helix</keyword>
<reference key="1">
    <citation type="journal article" date="2011" name="J. Bacteriol.">
        <title>Comparative genomics of 28 Salmonella enterica isolates: evidence for CRISPR-mediated adaptive sublineage evolution.</title>
        <authorList>
            <person name="Fricke W.F."/>
            <person name="Mammel M.K."/>
            <person name="McDermott P.F."/>
            <person name="Tartera C."/>
            <person name="White D.G."/>
            <person name="Leclerc J.E."/>
            <person name="Ravel J."/>
            <person name="Cebula T.A."/>
        </authorList>
    </citation>
    <scope>NUCLEOTIDE SEQUENCE [LARGE SCALE GENOMIC DNA]</scope>
    <source>
        <strain>SL483</strain>
    </source>
</reference>
<dbReference type="EMBL" id="CP001138">
    <property type="protein sequence ID" value="ACH49876.1"/>
    <property type="molecule type" value="Genomic_DNA"/>
</dbReference>
<dbReference type="RefSeq" id="WP_000106617.1">
    <property type="nucleotide sequence ID" value="NC_011149.1"/>
</dbReference>
<dbReference type="KEGG" id="sea:SeAg_B2476"/>
<dbReference type="HOGENOM" id="CLU_128746_0_0_6"/>
<dbReference type="Proteomes" id="UP000008819">
    <property type="component" value="Chromosome"/>
</dbReference>
<dbReference type="GO" id="GO:0005886">
    <property type="term" value="C:plasma membrane"/>
    <property type="evidence" value="ECO:0007669"/>
    <property type="project" value="UniProtKB-SubCell"/>
</dbReference>
<dbReference type="HAMAP" id="MF_01101">
    <property type="entry name" value="UPF0208"/>
    <property type="match status" value="1"/>
</dbReference>
<dbReference type="InterPro" id="IPR007334">
    <property type="entry name" value="UPF0208"/>
</dbReference>
<dbReference type="NCBIfam" id="NF002493">
    <property type="entry name" value="PRK01816.1"/>
    <property type="match status" value="1"/>
</dbReference>
<dbReference type="Pfam" id="PF04217">
    <property type="entry name" value="DUF412"/>
    <property type="match status" value="1"/>
</dbReference>
<proteinExistence type="inferred from homology"/>